<comment type="similarity">
    <text evidence="1">Belongs to the UPF0181 family.</text>
</comment>
<organism>
    <name type="scientific">Haemophilus influenzae (strain PittGG)</name>
    <dbReference type="NCBI Taxonomy" id="374931"/>
    <lineage>
        <taxon>Bacteria</taxon>
        <taxon>Pseudomonadati</taxon>
        <taxon>Pseudomonadota</taxon>
        <taxon>Gammaproteobacteria</taxon>
        <taxon>Pasteurellales</taxon>
        <taxon>Pasteurellaceae</taxon>
        <taxon>Haemophilus</taxon>
    </lineage>
</organism>
<gene>
    <name type="ordered locus">CGSHiGG_01050</name>
</gene>
<protein>
    <recommendedName>
        <fullName evidence="1">UPF0181 protein CGSHiGG_01050</fullName>
    </recommendedName>
</protein>
<proteinExistence type="inferred from homology"/>
<sequence>MFDINLTHEQQQKAVEQIQELMAKGISSGEAIQIVAKALREIHKNDKKTPEN</sequence>
<feature type="chain" id="PRO_1000014971" description="UPF0181 protein CGSHiGG_01050">
    <location>
        <begin position="1"/>
        <end position="52"/>
    </location>
</feature>
<reference key="1">
    <citation type="journal article" date="2007" name="Genome Biol.">
        <title>Characterization and modeling of the Haemophilus influenzae core and supragenomes based on the complete genomic sequences of Rd and 12 clinical nontypeable strains.</title>
        <authorList>
            <person name="Hogg J.S."/>
            <person name="Hu F.Z."/>
            <person name="Janto B."/>
            <person name="Boissy R."/>
            <person name="Hayes J."/>
            <person name="Keefe R."/>
            <person name="Post J.C."/>
            <person name="Ehrlich G.D."/>
        </authorList>
    </citation>
    <scope>NUCLEOTIDE SEQUENCE [LARGE SCALE GENOMIC DNA]</scope>
    <source>
        <strain>PittGG</strain>
    </source>
</reference>
<evidence type="ECO:0000255" key="1">
    <source>
        <dbReference type="HAMAP-Rule" id="MF_00507"/>
    </source>
</evidence>
<dbReference type="EMBL" id="CP000672">
    <property type="protein sequence ID" value="ABQ99305.1"/>
    <property type="molecule type" value="Genomic_DNA"/>
</dbReference>
<dbReference type="SMR" id="A5UEV0"/>
<dbReference type="KEGG" id="hiq:CGSHiGG_01050"/>
<dbReference type="HOGENOM" id="CLU_185263_1_1_6"/>
<dbReference type="Proteomes" id="UP000001990">
    <property type="component" value="Chromosome"/>
</dbReference>
<dbReference type="HAMAP" id="MF_00507">
    <property type="entry name" value="UPF0181"/>
    <property type="match status" value="1"/>
</dbReference>
<dbReference type="InterPro" id="IPR005371">
    <property type="entry name" value="UPF0181"/>
</dbReference>
<dbReference type="NCBIfam" id="NF003476">
    <property type="entry name" value="PRK05114.1"/>
    <property type="match status" value="1"/>
</dbReference>
<dbReference type="Pfam" id="PF03701">
    <property type="entry name" value="UPF0181"/>
    <property type="match status" value="1"/>
</dbReference>
<accession>A5UEV0</accession>
<name>Y1050_HAEIG</name>